<proteinExistence type="inferred from homology"/>
<dbReference type="EC" id="3.1.3.71" evidence="1"/>
<dbReference type="EMBL" id="AE015927">
    <property type="protein sequence ID" value="AAO34831.1"/>
    <property type="status" value="ALT_INIT"/>
    <property type="molecule type" value="Genomic_DNA"/>
</dbReference>
<dbReference type="RefSeq" id="WP_035110650.1">
    <property type="nucleotide sequence ID" value="NC_004557.1"/>
</dbReference>
<dbReference type="SMR" id="Q899J5"/>
<dbReference type="STRING" id="212717.CTC_00180"/>
<dbReference type="GeneID" id="24255121"/>
<dbReference type="KEGG" id="ctc:CTC_00180"/>
<dbReference type="HOGENOM" id="CLU_070028_0_0_9"/>
<dbReference type="OrthoDB" id="4913at2"/>
<dbReference type="Proteomes" id="UP000001412">
    <property type="component" value="Chromosome"/>
</dbReference>
<dbReference type="GO" id="GO:0050532">
    <property type="term" value="F:2-phosphosulfolactate phosphatase activity"/>
    <property type="evidence" value="ECO:0007669"/>
    <property type="project" value="UniProtKB-UniRule"/>
</dbReference>
<dbReference type="GO" id="GO:0000287">
    <property type="term" value="F:magnesium ion binding"/>
    <property type="evidence" value="ECO:0007669"/>
    <property type="project" value="UniProtKB-UniRule"/>
</dbReference>
<dbReference type="GO" id="GO:0050545">
    <property type="term" value="F:sulfopyruvate decarboxylase activity"/>
    <property type="evidence" value="ECO:0007669"/>
    <property type="project" value="TreeGrafter"/>
</dbReference>
<dbReference type="FunFam" id="3.90.1560.10:FF:000001">
    <property type="entry name" value="Probable 2-phosphosulfolactate phosphatase"/>
    <property type="match status" value="1"/>
</dbReference>
<dbReference type="Gene3D" id="3.90.1560.10">
    <property type="entry name" value="ComB-like"/>
    <property type="match status" value="1"/>
</dbReference>
<dbReference type="HAMAP" id="MF_00490">
    <property type="entry name" value="ComB"/>
    <property type="match status" value="1"/>
</dbReference>
<dbReference type="InterPro" id="IPR005238">
    <property type="entry name" value="ComB-like"/>
</dbReference>
<dbReference type="InterPro" id="IPR036702">
    <property type="entry name" value="ComB-like_sf"/>
</dbReference>
<dbReference type="NCBIfam" id="NF002055">
    <property type="entry name" value="PRK00886.1-4"/>
    <property type="match status" value="1"/>
</dbReference>
<dbReference type="PANTHER" id="PTHR37311">
    <property type="entry name" value="2-PHOSPHOSULFOLACTATE PHOSPHATASE-RELATED"/>
    <property type="match status" value="1"/>
</dbReference>
<dbReference type="PANTHER" id="PTHR37311:SF1">
    <property type="entry name" value="2-PHOSPHOSULFOLACTATE PHOSPHATASE-RELATED"/>
    <property type="match status" value="1"/>
</dbReference>
<dbReference type="Pfam" id="PF04029">
    <property type="entry name" value="2-ph_phosp"/>
    <property type="match status" value="1"/>
</dbReference>
<dbReference type="SUPFAM" id="SSF142823">
    <property type="entry name" value="ComB-like"/>
    <property type="match status" value="1"/>
</dbReference>
<protein>
    <recommendedName>
        <fullName evidence="1">Probable 2-phosphosulfolactate phosphatase</fullName>
        <ecNumber evidence="1">3.1.3.71</ecNumber>
    </recommendedName>
</protein>
<feature type="chain" id="PRO_0000081467" description="Probable 2-phosphosulfolactate phosphatase">
    <location>
        <begin position="1"/>
        <end position="233"/>
    </location>
</feature>
<accession>Q899J5</accession>
<gene>
    <name evidence="1" type="primary">comB</name>
    <name type="ordered locus">CTC_00180</name>
</gene>
<name>COMB_CLOTE</name>
<evidence type="ECO:0000255" key="1">
    <source>
        <dbReference type="HAMAP-Rule" id="MF_00490"/>
    </source>
</evidence>
<evidence type="ECO:0000305" key="2"/>
<organism>
    <name type="scientific">Clostridium tetani (strain Massachusetts / E88)</name>
    <dbReference type="NCBI Taxonomy" id="212717"/>
    <lineage>
        <taxon>Bacteria</taxon>
        <taxon>Bacillati</taxon>
        <taxon>Bacillota</taxon>
        <taxon>Clostridia</taxon>
        <taxon>Eubacteriales</taxon>
        <taxon>Clostridiaceae</taxon>
        <taxon>Clostridium</taxon>
    </lineage>
</organism>
<reference key="1">
    <citation type="journal article" date="2003" name="Proc. Natl. Acad. Sci. U.S.A.">
        <title>The genome sequence of Clostridium tetani, the causative agent of tetanus disease.</title>
        <authorList>
            <person name="Brueggemann H."/>
            <person name="Baeumer S."/>
            <person name="Fricke W.F."/>
            <person name="Wiezer A."/>
            <person name="Liesegang H."/>
            <person name="Decker I."/>
            <person name="Herzberg C."/>
            <person name="Martinez-Arias R."/>
            <person name="Merkl R."/>
            <person name="Henne A."/>
            <person name="Gottschalk G."/>
        </authorList>
    </citation>
    <scope>NUCLEOTIDE SEQUENCE [LARGE SCALE GENOMIC DNA]</scope>
    <source>
        <strain>Massachusetts / E88</strain>
    </source>
</reference>
<comment type="catalytic activity">
    <reaction evidence="1">
        <text>(2R)-O-phospho-3-sulfolactate + H2O = (2R)-3-sulfolactate + phosphate</text>
        <dbReference type="Rhea" id="RHEA:23416"/>
        <dbReference type="ChEBI" id="CHEBI:15377"/>
        <dbReference type="ChEBI" id="CHEBI:15597"/>
        <dbReference type="ChEBI" id="CHEBI:43474"/>
        <dbReference type="ChEBI" id="CHEBI:58738"/>
        <dbReference type="EC" id="3.1.3.71"/>
    </reaction>
</comment>
<comment type="cofactor">
    <cofactor evidence="1">
        <name>Mg(2+)</name>
        <dbReference type="ChEBI" id="CHEBI:18420"/>
    </cofactor>
</comment>
<comment type="similarity">
    <text evidence="1">Belongs to the ComB family.</text>
</comment>
<comment type="sequence caution" evidence="2">
    <conflict type="erroneous initiation">
        <sequence resource="EMBL-CDS" id="AAO34831"/>
    </conflict>
</comment>
<sequence length="233" mass="25990">MNIDIIISADDIKEEKIKDKSIVVIDILRATSVIITALNNGCKEVVPVVEIEEALEKVKNNRKNYILGGERKALKIEGFDCSNSPLEYKSELVKGKTLVITTSNGTRAIKEALLAKDILIGALINGKAVAEKLISLKNDVVIINAGTYGEFSIDDFICSGYIIDCIAKDMEVKLSDISKVAKYLYNMNTNMEFIKEAKHFKRIMELGLFMDLEYCCKKDIVSIVPQYKNGIIK</sequence>
<keyword id="KW-0378">Hydrolase</keyword>
<keyword id="KW-0460">Magnesium</keyword>
<keyword id="KW-1185">Reference proteome</keyword>